<accession>Q8Y206</accession>
<gene>
    <name evidence="1" type="primary">miaB</name>
    <name type="ordered locus">RSc0531</name>
</gene>
<feature type="chain" id="PRO_0000374479" description="tRNA-2-methylthio-N(6)-dimethylallyladenosine synthase">
    <location>
        <begin position="1"/>
        <end position="457"/>
    </location>
</feature>
<feature type="domain" description="MTTase N-terminal" evidence="1">
    <location>
        <begin position="2"/>
        <end position="119"/>
    </location>
</feature>
<feature type="domain" description="Radical SAM core" evidence="2">
    <location>
        <begin position="142"/>
        <end position="375"/>
    </location>
</feature>
<feature type="domain" description="TRAM" evidence="1">
    <location>
        <begin position="378"/>
        <end position="448"/>
    </location>
</feature>
<feature type="binding site" evidence="1">
    <location>
        <position position="11"/>
    </location>
    <ligand>
        <name>[4Fe-4S] cluster</name>
        <dbReference type="ChEBI" id="CHEBI:49883"/>
        <label>1</label>
    </ligand>
</feature>
<feature type="binding site" evidence="1">
    <location>
        <position position="48"/>
    </location>
    <ligand>
        <name>[4Fe-4S] cluster</name>
        <dbReference type="ChEBI" id="CHEBI:49883"/>
        <label>1</label>
    </ligand>
</feature>
<feature type="binding site" evidence="1">
    <location>
        <position position="82"/>
    </location>
    <ligand>
        <name>[4Fe-4S] cluster</name>
        <dbReference type="ChEBI" id="CHEBI:49883"/>
        <label>1</label>
    </ligand>
</feature>
<feature type="binding site" evidence="1">
    <location>
        <position position="156"/>
    </location>
    <ligand>
        <name>[4Fe-4S] cluster</name>
        <dbReference type="ChEBI" id="CHEBI:49883"/>
        <label>2</label>
        <note>4Fe-4S-S-AdoMet</note>
    </ligand>
</feature>
<feature type="binding site" evidence="1">
    <location>
        <position position="160"/>
    </location>
    <ligand>
        <name>[4Fe-4S] cluster</name>
        <dbReference type="ChEBI" id="CHEBI:49883"/>
        <label>2</label>
        <note>4Fe-4S-S-AdoMet</note>
    </ligand>
</feature>
<feature type="binding site" evidence="1">
    <location>
        <position position="163"/>
    </location>
    <ligand>
        <name>[4Fe-4S] cluster</name>
        <dbReference type="ChEBI" id="CHEBI:49883"/>
        <label>2</label>
        <note>4Fe-4S-S-AdoMet</note>
    </ligand>
</feature>
<name>MIAB_RALN1</name>
<protein>
    <recommendedName>
        <fullName evidence="1">tRNA-2-methylthio-N(6)-dimethylallyladenosine synthase</fullName>
        <ecNumber evidence="1">2.8.4.3</ecNumber>
    </recommendedName>
    <alternativeName>
        <fullName evidence="1">(Dimethylallyl)adenosine tRNA methylthiotransferase MiaB</fullName>
    </alternativeName>
    <alternativeName>
        <fullName evidence="1">tRNA-i(6)A37 methylthiotransferase</fullName>
    </alternativeName>
</protein>
<sequence length="457" mass="50732">MKKVFIKTFGCQMNEYDSDKMADVLNAAEGLVPTDTPEDADVILFNTCSVREKAQEKVFSDLGRVKALKARNPDLVVGVGGCVASQEGASIVARAPYVDVVFGPQTLHRLPELIDARRRTGRPQVDVSFPEIEKFDHLPPARVEGPSAFVSIMEGCSKYCSYCVVPYTRGEEVSRPFEDVLAEVAGLAEQGVREVTLLGQNVNAYIGKMGGTSERADFALLLEYVAEIPGIERIRYTTSHPKEFTARLIEAYATNRKLVDHLHLPVQHGSDRILMAMKRGYTVLEYKSIIRKLRAIRPDISIATDFIVGFPGETDADFAKTMDLVHEIGYDNSFSFIYSPRPGTPAANLHDDTPHAVKLERLKHLQATIDANMARISEGMVGSVQRILVEGPSRKDPSELHGRTENNRVVNFALPDLPQARRDQLVGQMLDVRIVHAYPHSLRGDVVEQRPDGVTQH</sequence>
<reference key="1">
    <citation type="journal article" date="2002" name="Nature">
        <title>Genome sequence of the plant pathogen Ralstonia solanacearum.</title>
        <authorList>
            <person name="Salanoubat M."/>
            <person name="Genin S."/>
            <person name="Artiguenave F."/>
            <person name="Gouzy J."/>
            <person name="Mangenot S."/>
            <person name="Arlat M."/>
            <person name="Billault A."/>
            <person name="Brottier P."/>
            <person name="Camus J.-C."/>
            <person name="Cattolico L."/>
            <person name="Chandler M."/>
            <person name="Choisne N."/>
            <person name="Claudel-Renard C."/>
            <person name="Cunnac S."/>
            <person name="Demange N."/>
            <person name="Gaspin C."/>
            <person name="Lavie M."/>
            <person name="Moisan A."/>
            <person name="Robert C."/>
            <person name="Saurin W."/>
            <person name="Schiex T."/>
            <person name="Siguier P."/>
            <person name="Thebault P."/>
            <person name="Whalen M."/>
            <person name="Wincker P."/>
            <person name="Levy M."/>
            <person name="Weissenbach J."/>
            <person name="Boucher C.A."/>
        </authorList>
    </citation>
    <scope>NUCLEOTIDE SEQUENCE [LARGE SCALE GENOMIC DNA]</scope>
    <source>
        <strain>ATCC BAA-1114 / GMI1000</strain>
    </source>
</reference>
<proteinExistence type="inferred from homology"/>
<organism>
    <name type="scientific">Ralstonia nicotianae (strain ATCC BAA-1114 / GMI1000)</name>
    <name type="common">Ralstonia solanacearum</name>
    <dbReference type="NCBI Taxonomy" id="267608"/>
    <lineage>
        <taxon>Bacteria</taxon>
        <taxon>Pseudomonadati</taxon>
        <taxon>Pseudomonadota</taxon>
        <taxon>Betaproteobacteria</taxon>
        <taxon>Burkholderiales</taxon>
        <taxon>Burkholderiaceae</taxon>
        <taxon>Ralstonia</taxon>
        <taxon>Ralstonia solanacearum species complex</taxon>
    </lineage>
</organism>
<evidence type="ECO:0000255" key="1">
    <source>
        <dbReference type="HAMAP-Rule" id="MF_01864"/>
    </source>
</evidence>
<evidence type="ECO:0000255" key="2">
    <source>
        <dbReference type="PROSITE-ProRule" id="PRU01266"/>
    </source>
</evidence>
<dbReference type="EC" id="2.8.4.3" evidence="1"/>
<dbReference type="EMBL" id="AL646052">
    <property type="protein sequence ID" value="CAD14059.1"/>
    <property type="molecule type" value="Genomic_DNA"/>
</dbReference>
<dbReference type="RefSeq" id="WP_011000490.1">
    <property type="nucleotide sequence ID" value="NC_003295.1"/>
</dbReference>
<dbReference type="SMR" id="Q8Y206"/>
<dbReference type="STRING" id="267608.RSc0531"/>
<dbReference type="EnsemblBacteria" id="CAD14059">
    <property type="protein sequence ID" value="CAD14059"/>
    <property type="gene ID" value="RSc0531"/>
</dbReference>
<dbReference type="KEGG" id="rso:RSc0531"/>
<dbReference type="eggNOG" id="COG0621">
    <property type="taxonomic scope" value="Bacteria"/>
</dbReference>
<dbReference type="HOGENOM" id="CLU_018697_2_0_4"/>
<dbReference type="Proteomes" id="UP000001436">
    <property type="component" value="Chromosome"/>
</dbReference>
<dbReference type="GO" id="GO:0005829">
    <property type="term" value="C:cytosol"/>
    <property type="evidence" value="ECO:0007669"/>
    <property type="project" value="TreeGrafter"/>
</dbReference>
<dbReference type="GO" id="GO:0051539">
    <property type="term" value="F:4 iron, 4 sulfur cluster binding"/>
    <property type="evidence" value="ECO:0007669"/>
    <property type="project" value="UniProtKB-UniRule"/>
</dbReference>
<dbReference type="GO" id="GO:0046872">
    <property type="term" value="F:metal ion binding"/>
    <property type="evidence" value="ECO:0007669"/>
    <property type="project" value="UniProtKB-KW"/>
</dbReference>
<dbReference type="GO" id="GO:0035597">
    <property type="term" value="F:N6-isopentenyladenosine methylthiotransferase activity"/>
    <property type="evidence" value="ECO:0007669"/>
    <property type="project" value="TreeGrafter"/>
</dbReference>
<dbReference type="CDD" id="cd01335">
    <property type="entry name" value="Radical_SAM"/>
    <property type="match status" value="1"/>
</dbReference>
<dbReference type="FunFam" id="3.40.50.12160:FF:000001">
    <property type="entry name" value="tRNA-2-methylthio-N(6)-dimethylallyladenosine synthase"/>
    <property type="match status" value="1"/>
</dbReference>
<dbReference type="FunFam" id="3.80.30.20:FF:000001">
    <property type="entry name" value="tRNA-2-methylthio-N(6)-dimethylallyladenosine synthase 2"/>
    <property type="match status" value="1"/>
</dbReference>
<dbReference type="Gene3D" id="3.40.50.12160">
    <property type="entry name" value="Methylthiotransferase, N-terminal domain"/>
    <property type="match status" value="1"/>
</dbReference>
<dbReference type="Gene3D" id="3.80.30.20">
    <property type="entry name" value="tm_1862 like domain"/>
    <property type="match status" value="1"/>
</dbReference>
<dbReference type="HAMAP" id="MF_01864">
    <property type="entry name" value="tRNA_metthiotr_MiaB"/>
    <property type="match status" value="1"/>
</dbReference>
<dbReference type="InterPro" id="IPR006638">
    <property type="entry name" value="Elp3/MiaA/NifB-like_rSAM"/>
</dbReference>
<dbReference type="InterPro" id="IPR005839">
    <property type="entry name" value="Methylthiotransferase"/>
</dbReference>
<dbReference type="InterPro" id="IPR020612">
    <property type="entry name" value="Methylthiotransferase_CS"/>
</dbReference>
<dbReference type="InterPro" id="IPR013848">
    <property type="entry name" value="Methylthiotransferase_N"/>
</dbReference>
<dbReference type="InterPro" id="IPR038135">
    <property type="entry name" value="Methylthiotransferase_N_sf"/>
</dbReference>
<dbReference type="InterPro" id="IPR006463">
    <property type="entry name" value="MiaB_methiolase"/>
</dbReference>
<dbReference type="InterPro" id="IPR007197">
    <property type="entry name" value="rSAM"/>
</dbReference>
<dbReference type="InterPro" id="IPR023404">
    <property type="entry name" value="rSAM_horseshoe"/>
</dbReference>
<dbReference type="InterPro" id="IPR002792">
    <property type="entry name" value="TRAM_dom"/>
</dbReference>
<dbReference type="NCBIfam" id="TIGR01574">
    <property type="entry name" value="miaB-methiolase"/>
    <property type="match status" value="1"/>
</dbReference>
<dbReference type="NCBIfam" id="TIGR00089">
    <property type="entry name" value="MiaB/RimO family radical SAM methylthiotransferase"/>
    <property type="match status" value="1"/>
</dbReference>
<dbReference type="PANTHER" id="PTHR43020">
    <property type="entry name" value="CDK5 REGULATORY SUBUNIT-ASSOCIATED PROTEIN 1"/>
    <property type="match status" value="1"/>
</dbReference>
<dbReference type="PANTHER" id="PTHR43020:SF2">
    <property type="entry name" value="MITOCHONDRIAL TRNA METHYLTHIOTRANSFERASE CDK5RAP1"/>
    <property type="match status" value="1"/>
</dbReference>
<dbReference type="Pfam" id="PF04055">
    <property type="entry name" value="Radical_SAM"/>
    <property type="match status" value="1"/>
</dbReference>
<dbReference type="Pfam" id="PF01938">
    <property type="entry name" value="TRAM"/>
    <property type="match status" value="1"/>
</dbReference>
<dbReference type="Pfam" id="PF00919">
    <property type="entry name" value="UPF0004"/>
    <property type="match status" value="1"/>
</dbReference>
<dbReference type="SFLD" id="SFLDF00273">
    <property type="entry name" value="(dimethylallyl)adenosine_tRNA"/>
    <property type="match status" value="1"/>
</dbReference>
<dbReference type="SFLD" id="SFLDG01082">
    <property type="entry name" value="B12-binding_domain_containing"/>
    <property type="match status" value="1"/>
</dbReference>
<dbReference type="SFLD" id="SFLDG01061">
    <property type="entry name" value="methylthiotransferase"/>
    <property type="match status" value="1"/>
</dbReference>
<dbReference type="SMART" id="SM00729">
    <property type="entry name" value="Elp3"/>
    <property type="match status" value="1"/>
</dbReference>
<dbReference type="SUPFAM" id="SSF102114">
    <property type="entry name" value="Radical SAM enzymes"/>
    <property type="match status" value="1"/>
</dbReference>
<dbReference type="PROSITE" id="PS51449">
    <property type="entry name" value="MTTASE_N"/>
    <property type="match status" value="1"/>
</dbReference>
<dbReference type="PROSITE" id="PS01278">
    <property type="entry name" value="MTTASE_RADICAL"/>
    <property type="match status" value="1"/>
</dbReference>
<dbReference type="PROSITE" id="PS51918">
    <property type="entry name" value="RADICAL_SAM"/>
    <property type="match status" value="1"/>
</dbReference>
<dbReference type="PROSITE" id="PS50926">
    <property type="entry name" value="TRAM"/>
    <property type="match status" value="1"/>
</dbReference>
<keyword id="KW-0004">4Fe-4S</keyword>
<keyword id="KW-0963">Cytoplasm</keyword>
<keyword id="KW-0408">Iron</keyword>
<keyword id="KW-0411">Iron-sulfur</keyword>
<keyword id="KW-0479">Metal-binding</keyword>
<keyword id="KW-1185">Reference proteome</keyword>
<keyword id="KW-0949">S-adenosyl-L-methionine</keyword>
<keyword id="KW-0808">Transferase</keyword>
<keyword id="KW-0819">tRNA processing</keyword>
<comment type="function">
    <text evidence="1">Catalyzes the methylthiolation of N6-(dimethylallyl)adenosine (i(6)A), leading to the formation of 2-methylthio-N6-(dimethylallyl)adenosine (ms(2)i(6)A) at position 37 in tRNAs that read codons beginning with uridine.</text>
</comment>
<comment type="catalytic activity">
    <reaction evidence="1">
        <text>N(6)-dimethylallyladenosine(37) in tRNA + (sulfur carrier)-SH + AH2 + 2 S-adenosyl-L-methionine = 2-methylsulfanyl-N(6)-dimethylallyladenosine(37) in tRNA + (sulfur carrier)-H + 5'-deoxyadenosine + L-methionine + A + S-adenosyl-L-homocysteine + 2 H(+)</text>
        <dbReference type="Rhea" id="RHEA:37067"/>
        <dbReference type="Rhea" id="RHEA-COMP:10375"/>
        <dbReference type="Rhea" id="RHEA-COMP:10376"/>
        <dbReference type="Rhea" id="RHEA-COMP:14737"/>
        <dbReference type="Rhea" id="RHEA-COMP:14739"/>
        <dbReference type="ChEBI" id="CHEBI:13193"/>
        <dbReference type="ChEBI" id="CHEBI:15378"/>
        <dbReference type="ChEBI" id="CHEBI:17319"/>
        <dbReference type="ChEBI" id="CHEBI:17499"/>
        <dbReference type="ChEBI" id="CHEBI:29917"/>
        <dbReference type="ChEBI" id="CHEBI:57844"/>
        <dbReference type="ChEBI" id="CHEBI:57856"/>
        <dbReference type="ChEBI" id="CHEBI:59789"/>
        <dbReference type="ChEBI" id="CHEBI:64428"/>
        <dbReference type="ChEBI" id="CHEBI:74415"/>
        <dbReference type="ChEBI" id="CHEBI:74417"/>
        <dbReference type="EC" id="2.8.4.3"/>
    </reaction>
</comment>
<comment type="cofactor">
    <cofactor evidence="1">
        <name>[4Fe-4S] cluster</name>
        <dbReference type="ChEBI" id="CHEBI:49883"/>
    </cofactor>
    <text evidence="1">Binds 2 [4Fe-4S] clusters. One cluster is coordinated with 3 cysteines and an exchangeable S-adenosyl-L-methionine.</text>
</comment>
<comment type="subunit">
    <text evidence="1">Monomer.</text>
</comment>
<comment type="subcellular location">
    <subcellularLocation>
        <location evidence="1">Cytoplasm</location>
    </subcellularLocation>
</comment>
<comment type="similarity">
    <text evidence="1">Belongs to the methylthiotransferase family. MiaB subfamily.</text>
</comment>